<proteinExistence type="evidence at transcript level"/>
<reference key="1">
    <citation type="submission" date="2004-11" db="EMBL/GenBank/DDBJ databases">
        <authorList>
            <consortium name="The German cDNA consortium"/>
        </authorList>
    </citation>
    <scope>NUCLEOTIDE SEQUENCE [LARGE SCALE MRNA]</scope>
    <source>
        <tissue>Kidney</tissue>
    </source>
</reference>
<comment type="function">
    <text evidence="3">Component of the ERLIN1/ERLIN2 complex which mediates the endoplasmic reticulum-associated degradation (ERAD) of inositol 1,4,5-trisphosphate receptors (IP3Rs) such as ITPR1. Promotes sterol-accelerated ERAD of HMGCR probably implicating an AMFR/gp78-containing ubiquitin ligase complex. Involved in regulation of cellular cholesterol homeostasis by regulation the SREBP signaling pathway. May promote ER retention of the SCAP-SREBF complex (By similarity).</text>
</comment>
<comment type="subunit">
    <text evidence="3 4">Forms a heteromeric complex with ERLIN1. In complex with ERLIN1, interacts with RNF170. Interacts with activated ITPR1, independently of the degree of ITPR1 polyubiquitination. Interacts with SCAP, INSIG1, SREBF1 and SREBF2 under cholesterol sufficiency conditions; indicative for an association with the SCAP-SREBP-INSIG complex. Probably part of an AMFR/gp78 and INSIG1-containing ubiquitin ligase complex involved in ERAD of HMGCR. Interacts with TMUB1; TMUB1 bridges the association with AMFR. Interacts with SYVN1 and RNF139. Interacts with TMEM259 (By similarity). Interacts with TMEM41B (By similarity).</text>
</comment>
<comment type="subcellular location">
    <subcellularLocation>
        <location evidence="1">Endoplasmic reticulum membrane</location>
        <topology evidence="1">Single-pass type II membrane protein</topology>
    </subcellularLocation>
    <text evidence="1">Associated with lipid raft-like domains of the endoplasmic reticulum membrane.</text>
</comment>
<comment type="PTM">
    <text evidence="2">Deubiquitinated by USP25; leading to stabilization.</text>
</comment>
<comment type="similarity">
    <text evidence="6">Belongs to the band 7/mec-2 family.</text>
</comment>
<comment type="sequence caution" evidence="6">
    <conflict type="erroneous initiation">
        <sequence resource="EMBL-CDS" id="CAH90754"/>
    </conflict>
</comment>
<keyword id="KW-0007">Acetylation</keyword>
<keyword id="KW-0153">Cholesterol metabolism</keyword>
<keyword id="KW-0256">Endoplasmic reticulum</keyword>
<keyword id="KW-0325">Glycoprotein</keyword>
<keyword id="KW-0443">Lipid metabolism</keyword>
<keyword id="KW-0472">Membrane</keyword>
<keyword id="KW-1185">Reference proteome</keyword>
<keyword id="KW-0735">Signal-anchor</keyword>
<keyword id="KW-0753">Steroid metabolism</keyword>
<keyword id="KW-1207">Sterol metabolism</keyword>
<keyword id="KW-0812">Transmembrane</keyword>
<keyword id="KW-1133">Transmembrane helix</keyword>
<organism>
    <name type="scientific">Pongo abelii</name>
    <name type="common">Sumatran orangutan</name>
    <name type="synonym">Pongo pygmaeus abelii</name>
    <dbReference type="NCBI Taxonomy" id="9601"/>
    <lineage>
        <taxon>Eukaryota</taxon>
        <taxon>Metazoa</taxon>
        <taxon>Chordata</taxon>
        <taxon>Craniata</taxon>
        <taxon>Vertebrata</taxon>
        <taxon>Euteleostomi</taxon>
        <taxon>Mammalia</taxon>
        <taxon>Eutheria</taxon>
        <taxon>Euarchontoglires</taxon>
        <taxon>Primates</taxon>
        <taxon>Haplorrhini</taxon>
        <taxon>Catarrhini</taxon>
        <taxon>Hominidae</taxon>
        <taxon>Pongo</taxon>
    </lineage>
</organism>
<name>ERLN2_PONAB</name>
<accession>Q5R7C5</accession>
<accession>Q5RBV6</accession>
<protein>
    <recommendedName>
        <fullName>Erlin-2</fullName>
    </recommendedName>
    <alternativeName>
        <fullName>Endoplasmic reticulum lipid raft-associated protein 2</fullName>
    </alternativeName>
    <alternativeName>
        <fullName>Stomatin-prohibitin-flotillin-HflC/K domain-containing protein 2</fullName>
        <shortName>SPFH domain-containing protein 2</shortName>
    </alternativeName>
</protein>
<feature type="chain" id="PRO_0000002789" description="Erlin-2">
    <location>
        <begin position="1"/>
        <end position="339"/>
    </location>
</feature>
<feature type="topological domain" description="Cytoplasmic" evidence="5">
    <location>
        <begin position="1"/>
        <end position="3"/>
    </location>
</feature>
<feature type="transmembrane region" description="Helical" evidence="5">
    <location>
        <begin position="4"/>
        <end position="24"/>
    </location>
</feature>
<feature type="topological domain" description="Lumenal" evidence="5">
    <location>
        <begin position="25"/>
        <end position="339"/>
    </location>
</feature>
<feature type="region of interest" description="Interaction with ERLIN1" evidence="1">
    <location>
        <begin position="177"/>
        <end position="309"/>
    </location>
</feature>
<feature type="modified residue" description="N6-acetyllysine" evidence="2">
    <location>
        <position position="267"/>
    </location>
</feature>
<feature type="glycosylation site" description="N-linked (GlcNAc...) asparagine" evidence="5">
    <location>
        <position position="106"/>
    </location>
</feature>
<feature type="sequence conflict" description="In Ref. 1; CAH90754." evidence="6" ref="1">
    <original>A</original>
    <variation>G</variation>
    <location>
        <position position="269"/>
    </location>
</feature>
<feature type="sequence conflict" description="In Ref. 1; CAH90754." evidence="6" ref="1">
    <original>N</original>
    <variation>K</variation>
    <location>
        <position position="339"/>
    </location>
</feature>
<sequence length="339" mass="37840">MAQLGAVVAVASSFFCASLFSAVHKIEEGHIGVYYRGGALLTSTSGPGFHLMLPFITSYKSVQTTLQTDEVKNVPCGTSGGVMIYFDRIEVVNFLVPNAVYDIVKNYTADYDKALIFNKIHHELNQFCSVHTLQEVYIELFDQIDENLKLALQQDLTSMAPGLVIQAVRVTKPNIPEAIRRNYELMESEKTKLLIAAQKQKVVEKEAETERKKALIEAEKVAQVAEITYGQKVMEKETEKKISEIEDAAFLAREKAKADAECYTAMKIAEANKLKLTPEYLQLMKYKAIASNSKIYFGKDIPNMFMDSAGSVSKQFEGLADKLSFGLEDEPLETATKEN</sequence>
<gene>
    <name type="primary">ERLIN2</name>
    <name type="synonym">SPFH2</name>
</gene>
<dbReference type="EMBL" id="CR858527">
    <property type="protein sequence ID" value="CAH90754.1"/>
    <property type="status" value="ALT_INIT"/>
    <property type="molecule type" value="mRNA"/>
</dbReference>
<dbReference type="EMBL" id="CR860193">
    <property type="protein sequence ID" value="CAH92335.1"/>
    <property type="molecule type" value="mRNA"/>
</dbReference>
<dbReference type="RefSeq" id="NP_001126372.1">
    <property type="nucleotide sequence ID" value="NM_001132900.1"/>
</dbReference>
<dbReference type="RefSeq" id="XP_009241970.1">
    <property type="nucleotide sequence ID" value="XM_009243695.4"/>
</dbReference>
<dbReference type="RefSeq" id="XP_009241971.1">
    <property type="nucleotide sequence ID" value="XM_009243696.4"/>
</dbReference>
<dbReference type="RefSeq" id="XP_009241972.1">
    <property type="nucleotide sequence ID" value="XM_009243697.4"/>
</dbReference>
<dbReference type="SMR" id="Q5R7C5"/>
<dbReference type="FunCoup" id="Q5R7C5">
    <property type="interactions" value="2402"/>
</dbReference>
<dbReference type="STRING" id="9601.ENSPPYP00000020748"/>
<dbReference type="GlyCosmos" id="Q5R7C5">
    <property type="glycosylation" value="1 site, No reported glycans"/>
</dbReference>
<dbReference type="Ensembl" id="ENSPPYT00000061314.1">
    <property type="protein sequence ID" value="ENSPPYP00000043710.1"/>
    <property type="gene ID" value="ENSPPYG00000018510.3"/>
</dbReference>
<dbReference type="GeneID" id="100173353"/>
<dbReference type="KEGG" id="pon:100173353"/>
<dbReference type="CTD" id="11160"/>
<dbReference type="eggNOG" id="KOG2962">
    <property type="taxonomic scope" value="Eukaryota"/>
</dbReference>
<dbReference type="GeneTree" id="ENSGT00390000014666"/>
<dbReference type="HOGENOM" id="CLU_058701_0_0_1"/>
<dbReference type="InParanoid" id="Q5R7C5"/>
<dbReference type="OrthoDB" id="77368at2759"/>
<dbReference type="Proteomes" id="UP000001595">
    <property type="component" value="Chromosome 8"/>
</dbReference>
<dbReference type="GO" id="GO:0005789">
    <property type="term" value="C:endoplasmic reticulum membrane"/>
    <property type="evidence" value="ECO:0000250"/>
    <property type="project" value="UniProtKB"/>
</dbReference>
<dbReference type="GO" id="GO:0015485">
    <property type="term" value="F:cholesterol binding"/>
    <property type="evidence" value="ECO:0007669"/>
    <property type="project" value="TreeGrafter"/>
</dbReference>
<dbReference type="GO" id="GO:0031625">
    <property type="term" value="F:ubiquitin protein ligase binding"/>
    <property type="evidence" value="ECO:0007669"/>
    <property type="project" value="InterPro"/>
</dbReference>
<dbReference type="GO" id="GO:0008203">
    <property type="term" value="P:cholesterol metabolic process"/>
    <property type="evidence" value="ECO:0007669"/>
    <property type="project" value="UniProtKB-KW"/>
</dbReference>
<dbReference type="GO" id="GO:0032933">
    <property type="term" value="P:SREBP signaling pathway"/>
    <property type="evidence" value="ECO:0007669"/>
    <property type="project" value="TreeGrafter"/>
</dbReference>
<dbReference type="CDD" id="cd03406">
    <property type="entry name" value="SPFH_like_u3"/>
    <property type="match status" value="1"/>
</dbReference>
<dbReference type="FunFam" id="3.30.479.30:FF:000009">
    <property type="entry name" value="Erlin-2 isoform 1"/>
    <property type="match status" value="1"/>
</dbReference>
<dbReference type="Gene3D" id="3.30.479.30">
    <property type="entry name" value="Band 7 domain"/>
    <property type="match status" value="1"/>
</dbReference>
<dbReference type="InterPro" id="IPR001107">
    <property type="entry name" value="Band_7"/>
</dbReference>
<dbReference type="InterPro" id="IPR036013">
    <property type="entry name" value="Band_7/SPFH_dom_sf"/>
</dbReference>
<dbReference type="InterPro" id="IPR033294">
    <property type="entry name" value="Erlin1/2"/>
</dbReference>
<dbReference type="PANTHER" id="PTHR15351">
    <property type="entry name" value="ERLIN (ER LIPID RAFT ASSOCIATED PROTEIN) HOMOLOG"/>
    <property type="match status" value="1"/>
</dbReference>
<dbReference type="PANTHER" id="PTHR15351:SF4">
    <property type="entry name" value="ERLIN-2"/>
    <property type="match status" value="1"/>
</dbReference>
<dbReference type="Pfam" id="PF01145">
    <property type="entry name" value="Band_7"/>
    <property type="match status" value="1"/>
</dbReference>
<dbReference type="SMART" id="SM00244">
    <property type="entry name" value="PHB"/>
    <property type="match status" value="1"/>
</dbReference>
<evidence type="ECO:0000250" key="1"/>
<evidence type="ECO:0000250" key="2">
    <source>
        <dbReference type="UniProtKB" id="O75477"/>
    </source>
</evidence>
<evidence type="ECO:0000250" key="3">
    <source>
        <dbReference type="UniProtKB" id="O94905"/>
    </source>
</evidence>
<evidence type="ECO:0000250" key="4">
    <source>
        <dbReference type="UniProtKB" id="Q8BFZ9"/>
    </source>
</evidence>
<evidence type="ECO:0000255" key="5"/>
<evidence type="ECO:0000305" key="6"/>